<name>NAGB_GEOSW</name>
<gene>
    <name evidence="1" type="primary">nagB</name>
    <name type="ordered locus">GWCH70_2216</name>
</gene>
<organism>
    <name type="scientific">Geobacillus sp. (strain WCH70)</name>
    <dbReference type="NCBI Taxonomy" id="471223"/>
    <lineage>
        <taxon>Bacteria</taxon>
        <taxon>Bacillati</taxon>
        <taxon>Bacillota</taxon>
        <taxon>Bacilli</taxon>
        <taxon>Bacillales</taxon>
        <taxon>Anoxybacillaceae</taxon>
        <taxon>Geobacillus</taxon>
    </lineage>
</organism>
<proteinExistence type="inferred from homology"/>
<reference key="1">
    <citation type="submission" date="2009-06" db="EMBL/GenBank/DDBJ databases">
        <title>Complete sequence of chromosome of Geopacillus sp. WCH70.</title>
        <authorList>
            <consortium name="US DOE Joint Genome Institute"/>
            <person name="Lucas S."/>
            <person name="Copeland A."/>
            <person name="Lapidus A."/>
            <person name="Glavina del Rio T."/>
            <person name="Dalin E."/>
            <person name="Tice H."/>
            <person name="Bruce D."/>
            <person name="Goodwin L."/>
            <person name="Pitluck S."/>
            <person name="Chertkov O."/>
            <person name="Brettin T."/>
            <person name="Detter J.C."/>
            <person name="Han C."/>
            <person name="Larimer F."/>
            <person name="Land M."/>
            <person name="Hauser L."/>
            <person name="Kyrpides N."/>
            <person name="Mikhailova N."/>
            <person name="Brumm P."/>
            <person name="Mead D.A."/>
            <person name="Richardson P."/>
        </authorList>
    </citation>
    <scope>NUCLEOTIDE SEQUENCE [LARGE SCALE GENOMIC DNA]</scope>
    <source>
        <strain>WCH70</strain>
    </source>
</reference>
<keyword id="KW-0119">Carbohydrate metabolism</keyword>
<keyword id="KW-0378">Hydrolase</keyword>
<feature type="chain" id="PRO_1000214085" description="Glucosamine-6-phosphate deaminase">
    <location>
        <begin position="1"/>
        <end position="251"/>
    </location>
</feature>
<feature type="active site" description="Proton acceptor; for enolization step" evidence="1">
    <location>
        <position position="67"/>
    </location>
</feature>
<feature type="active site" description="For ring-opening step" evidence="1">
    <location>
        <position position="136"/>
    </location>
</feature>
<feature type="active site" description="Proton acceptor; for ring-opening step" evidence="1">
    <location>
        <position position="138"/>
    </location>
</feature>
<feature type="active site" description="For ring-opening step" evidence="1">
    <location>
        <position position="143"/>
    </location>
</feature>
<sequence length="251" mass="27724">MKLIEAANYEEMSQKAADIIIAQVKEKPDSVLGLATGSTMLGTYKQLVEDHRQNGTSYRNVRTVNLDEYIGLSPDHPNSYRYYMNQHLFSHIDIPLSQTYIPNGASDDVEAECRRYEQLIESLGGIDLQLLGIGRNGHIGFNEPGTSFSAPTHVVELAPSTRQANARFFPSFNDVPRQAITMGIATIMKSRHILLLASGTAKAPIMAKLFEETVTTDVPASVLHTHPNVTVIADQDALSLVPDEKRKVYAK</sequence>
<comment type="function">
    <text evidence="1">Catalyzes the reversible isomerization-deamination of glucosamine 6-phosphate (GlcN6P) to form fructose 6-phosphate (Fru6P) and ammonium ion.</text>
</comment>
<comment type="catalytic activity">
    <reaction evidence="1">
        <text>alpha-D-glucosamine 6-phosphate + H2O = beta-D-fructose 6-phosphate + NH4(+)</text>
        <dbReference type="Rhea" id="RHEA:12172"/>
        <dbReference type="ChEBI" id="CHEBI:15377"/>
        <dbReference type="ChEBI" id="CHEBI:28938"/>
        <dbReference type="ChEBI" id="CHEBI:57634"/>
        <dbReference type="ChEBI" id="CHEBI:75989"/>
        <dbReference type="EC" id="3.5.99.6"/>
    </reaction>
</comment>
<comment type="pathway">
    <text evidence="1">Amino-sugar metabolism; N-acetylneuraminate degradation; D-fructose 6-phosphate from N-acetylneuraminate: step 5/5.</text>
</comment>
<comment type="similarity">
    <text evidence="1">Belongs to the glucosamine/galactosamine-6-phosphate isomerase family. NagB subfamily.</text>
</comment>
<dbReference type="EC" id="3.5.99.6" evidence="1"/>
<dbReference type="EMBL" id="CP001638">
    <property type="protein sequence ID" value="ACS24925.1"/>
    <property type="molecule type" value="Genomic_DNA"/>
</dbReference>
<dbReference type="SMR" id="C5D3L0"/>
<dbReference type="STRING" id="471223.GWCH70_2216"/>
<dbReference type="KEGG" id="gwc:GWCH70_2216"/>
<dbReference type="eggNOG" id="COG0363">
    <property type="taxonomic scope" value="Bacteria"/>
</dbReference>
<dbReference type="HOGENOM" id="CLU_049611_1_1_9"/>
<dbReference type="OrthoDB" id="9791139at2"/>
<dbReference type="UniPathway" id="UPA00629">
    <property type="reaction ID" value="UER00684"/>
</dbReference>
<dbReference type="GO" id="GO:0005737">
    <property type="term" value="C:cytoplasm"/>
    <property type="evidence" value="ECO:0007669"/>
    <property type="project" value="TreeGrafter"/>
</dbReference>
<dbReference type="GO" id="GO:0004342">
    <property type="term" value="F:glucosamine-6-phosphate deaminase activity"/>
    <property type="evidence" value="ECO:0007669"/>
    <property type="project" value="UniProtKB-UniRule"/>
</dbReference>
<dbReference type="GO" id="GO:0042802">
    <property type="term" value="F:identical protein binding"/>
    <property type="evidence" value="ECO:0007669"/>
    <property type="project" value="TreeGrafter"/>
</dbReference>
<dbReference type="GO" id="GO:0005975">
    <property type="term" value="P:carbohydrate metabolic process"/>
    <property type="evidence" value="ECO:0007669"/>
    <property type="project" value="InterPro"/>
</dbReference>
<dbReference type="GO" id="GO:0006043">
    <property type="term" value="P:glucosamine catabolic process"/>
    <property type="evidence" value="ECO:0007669"/>
    <property type="project" value="TreeGrafter"/>
</dbReference>
<dbReference type="GO" id="GO:0006046">
    <property type="term" value="P:N-acetylglucosamine catabolic process"/>
    <property type="evidence" value="ECO:0007669"/>
    <property type="project" value="TreeGrafter"/>
</dbReference>
<dbReference type="GO" id="GO:0019262">
    <property type="term" value="P:N-acetylneuraminate catabolic process"/>
    <property type="evidence" value="ECO:0007669"/>
    <property type="project" value="UniProtKB-UniRule"/>
</dbReference>
<dbReference type="CDD" id="cd01399">
    <property type="entry name" value="GlcN6P_deaminase"/>
    <property type="match status" value="1"/>
</dbReference>
<dbReference type="FunFam" id="3.40.50.1360:FF:000003">
    <property type="entry name" value="Glucosamine-6-phosphate deaminase"/>
    <property type="match status" value="1"/>
</dbReference>
<dbReference type="Gene3D" id="3.40.50.1360">
    <property type="match status" value="1"/>
</dbReference>
<dbReference type="HAMAP" id="MF_01241">
    <property type="entry name" value="GlcN6P_deamin"/>
    <property type="match status" value="1"/>
</dbReference>
<dbReference type="InterPro" id="IPR006148">
    <property type="entry name" value="Glc/Gal-6P_isomerase"/>
</dbReference>
<dbReference type="InterPro" id="IPR004547">
    <property type="entry name" value="Glucosamine6P_isomerase"/>
</dbReference>
<dbReference type="InterPro" id="IPR018321">
    <property type="entry name" value="Glucosamine6P_isomerase_CS"/>
</dbReference>
<dbReference type="InterPro" id="IPR037171">
    <property type="entry name" value="NagB/RpiA_transferase-like"/>
</dbReference>
<dbReference type="NCBIfam" id="TIGR00502">
    <property type="entry name" value="nagB"/>
    <property type="match status" value="1"/>
</dbReference>
<dbReference type="PANTHER" id="PTHR11280">
    <property type="entry name" value="GLUCOSAMINE-6-PHOSPHATE ISOMERASE"/>
    <property type="match status" value="1"/>
</dbReference>
<dbReference type="PANTHER" id="PTHR11280:SF5">
    <property type="entry name" value="GLUCOSAMINE-6-PHOSPHATE ISOMERASE"/>
    <property type="match status" value="1"/>
</dbReference>
<dbReference type="Pfam" id="PF01182">
    <property type="entry name" value="Glucosamine_iso"/>
    <property type="match status" value="1"/>
</dbReference>
<dbReference type="SUPFAM" id="SSF100950">
    <property type="entry name" value="NagB/RpiA/CoA transferase-like"/>
    <property type="match status" value="1"/>
</dbReference>
<dbReference type="PROSITE" id="PS01161">
    <property type="entry name" value="GLC_GALNAC_ISOMERASE"/>
    <property type="match status" value="1"/>
</dbReference>
<evidence type="ECO:0000255" key="1">
    <source>
        <dbReference type="HAMAP-Rule" id="MF_01241"/>
    </source>
</evidence>
<protein>
    <recommendedName>
        <fullName evidence="1">Glucosamine-6-phosphate deaminase</fullName>
        <ecNumber evidence="1">3.5.99.6</ecNumber>
    </recommendedName>
    <alternativeName>
        <fullName evidence="1">GlcN6P deaminase</fullName>
        <shortName evidence="1">GNPDA</shortName>
    </alternativeName>
    <alternativeName>
        <fullName evidence="1">Glucosamine-6-phosphate isomerase</fullName>
    </alternativeName>
</protein>
<accession>C5D3L0</accession>